<protein>
    <recommendedName>
        <fullName evidence="1">2,3-bisphosphoglycerate-dependent phosphoglycerate mutase</fullName>
        <shortName evidence="1">BPG-dependent PGAM</shortName>
        <shortName evidence="1">PGAM</shortName>
        <shortName evidence="1">Phosphoglyceromutase</shortName>
        <shortName evidence="1">dPGM</shortName>
        <ecNumber evidence="1">5.4.2.11</ecNumber>
    </recommendedName>
</protein>
<feature type="chain" id="PRO_1000135943" description="2,3-bisphosphoglycerate-dependent phosphoglycerate mutase">
    <location>
        <begin position="1"/>
        <end position="250"/>
    </location>
</feature>
<feature type="active site" description="Tele-phosphohistidine intermediate" evidence="1">
    <location>
        <position position="11"/>
    </location>
</feature>
<feature type="active site" description="Proton donor/acceptor" evidence="1">
    <location>
        <position position="89"/>
    </location>
</feature>
<feature type="binding site" evidence="1">
    <location>
        <begin position="10"/>
        <end position="17"/>
    </location>
    <ligand>
        <name>substrate</name>
    </ligand>
</feature>
<feature type="binding site" evidence="1">
    <location>
        <begin position="23"/>
        <end position="24"/>
    </location>
    <ligand>
        <name>substrate</name>
    </ligand>
</feature>
<feature type="binding site" evidence="1">
    <location>
        <position position="62"/>
    </location>
    <ligand>
        <name>substrate</name>
    </ligand>
</feature>
<feature type="binding site" evidence="1">
    <location>
        <begin position="89"/>
        <end position="92"/>
    </location>
    <ligand>
        <name>substrate</name>
    </ligand>
</feature>
<feature type="binding site" evidence="1">
    <location>
        <position position="100"/>
    </location>
    <ligand>
        <name>substrate</name>
    </ligand>
</feature>
<feature type="binding site" evidence="1">
    <location>
        <begin position="116"/>
        <end position="117"/>
    </location>
    <ligand>
        <name>substrate</name>
    </ligand>
</feature>
<feature type="binding site" evidence="1">
    <location>
        <begin position="185"/>
        <end position="186"/>
    </location>
    <ligand>
        <name>substrate</name>
    </ligand>
</feature>
<feature type="site" description="Transition state stabilizer" evidence="1">
    <location>
        <position position="184"/>
    </location>
</feature>
<accession>B7MGL2</accession>
<proteinExistence type="inferred from homology"/>
<evidence type="ECO:0000255" key="1">
    <source>
        <dbReference type="HAMAP-Rule" id="MF_01039"/>
    </source>
</evidence>
<keyword id="KW-0312">Gluconeogenesis</keyword>
<keyword id="KW-0324">Glycolysis</keyword>
<keyword id="KW-0413">Isomerase</keyword>
<keyword id="KW-1185">Reference proteome</keyword>
<gene>
    <name evidence="1" type="primary">gpmA</name>
    <name type="ordered locus">ECS88_0771</name>
</gene>
<reference key="1">
    <citation type="journal article" date="2009" name="PLoS Genet.">
        <title>Organised genome dynamics in the Escherichia coli species results in highly diverse adaptive paths.</title>
        <authorList>
            <person name="Touchon M."/>
            <person name="Hoede C."/>
            <person name="Tenaillon O."/>
            <person name="Barbe V."/>
            <person name="Baeriswyl S."/>
            <person name="Bidet P."/>
            <person name="Bingen E."/>
            <person name="Bonacorsi S."/>
            <person name="Bouchier C."/>
            <person name="Bouvet O."/>
            <person name="Calteau A."/>
            <person name="Chiapello H."/>
            <person name="Clermont O."/>
            <person name="Cruveiller S."/>
            <person name="Danchin A."/>
            <person name="Diard M."/>
            <person name="Dossat C."/>
            <person name="Karoui M.E."/>
            <person name="Frapy E."/>
            <person name="Garry L."/>
            <person name="Ghigo J.M."/>
            <person name="Gilles A.M."/>
            <person name="Johnson J."/>
            <person name="Le Bouguenec C."/>
            <person name="Lescat M."/>
            <person name="Mangenot S."/>
            <person name="Martinez-Jehanne V."/>
            <person name="Matic I."/>
            <person name="Nassif X."/>
            <person name="Oztas S."/>
            <person name="Petit M.A."/>
            <person name="Pichon C."/>
            <person name="Rouy Z."/>
            <person name="Ruf C.S."/>
            <person name="Schneider D."/>
            <person name="Tourret J."/>
            <person name="Vacherie B."/>
            <person name="Vallenet D."/>
            <person name="Medigue C."/>
            <person name="Rocha E.P.C."/>
            <person name="Denamur E."/>
        </authorList>
    </citation>
    <scope>NUCLEOTIDE SEQUENCE [LARGE SCALE GENOMIC DNA]</scope>
    <source>
        <strain>S88 / ExPEC</strain>
    </source>
</reference>
<sequence length="250" mass="28556">MAVTKLVLVRHGESQWNKENRFTGWYDVDLSEKGVSEAKAAGKLLKEEGYSFDFAYTSVLKRAIHTLWNVLDELDQAWLPVEKSWKLNERHYGALQGLNKAETAEKYGDEQVKQWRRGFAVTPPELTKDDERYPGHDPRYAKLSEKELPLTESLALTIDRVIPYWNETILPRMKSGERVIIAAHGNSLRALVKYLDNMSEEEILELNIPTGVPLVYEFDENFKPLKRYYLGNADEIAAKAAAVANQGKAK</sequence>
<name>GPMA_ECO45</name>
<comment type="function">
    <text evidence="1">Catalyzes the interconversion of 2-phosphoglycerate and 3-phosphoglycerate.</text>
</comment>
<comment type="catalytic activity">
    <reaction evidence="1">
        <text>(2R)-2-phosphoglycerate = (2R)-3-phosphoglycerate</text>
        <dbReference type="Rhea" id="RHEA:15901"/>
        <dbReference type="ChEBI" id="CHEBI:58272"/>
        <dbReference type="ChEBI" id="CHEBI:58289"/>
        <dbReference type="EC" id="5.4.2.11"/>
    </reaction>
</comment>
<comment type="pathway">
    <text evidence="1">Carbohydrate degradation; glycolysis; pyruvate from D-glyceraldehyde 3-phosphate: step 3/5.</text>
</comment>
<comment type="subunit">
    <text evidence="1">Homodimer.</text>
</comment>
<comment type="similarity">
    <text evidence="1">Belongs to the phosphoglycerate mutase family. BPG-dependent PGAM subfamily.</text>
</comment>
<organism>
    <name type="scientific">Escherichia coli O45:K1 (strain S88 / ExPEC)</name>
    <dbReference type="NCBI Taxonomy" id="585035"/>
    <lineage>
        <taxon>Bacteria</taxon>
        <taxon>Pseudomonadati</taxon>
        <taxon>Pseudomonadota</taxon>
        <taxon>Gammaproteobacteria</taxon>
        <taxon>Enterobacterales</taxon>
        <taxon>Enterobacteriaceae</taxon>
        <taxon>Escherichia</taxon>
    </lineage>
</organism>
<dbReference type="EC" id="5.4.2.11" evidence="1"/>
<dbReference type="EMBL" id="CU928161">
    <property type="protein sequence ID" value="CAR02110.1"/>
    <property type="molecule type" value="Genomic_DNA"/>
</dbReference>
<dbReference type="RefSeq" id="WP_001295305.1">
    <property type="nucleotide sequence ID" value="NC_011742.1"/>
</dbReference>
<dbReference type="SMR" id="B7MGL2"/>
<dbReference type="GeneID" id="93776726"/>
<dbReference type="KEGG" id="ecz:ECS88_0771"/>
<dbReference type="HOGENOM" id="CLU_033323_1_1_6"/>
<dbReference type="UniPathway" id="UPA00109">
    <property type="reaction ID" value="UER00186"/>
</dbReference>
<dbReference type="Proteomes" id="UP000000747">
    <property type="component" value="Chromosome"/>
</dbReference>
<dbReference type="GO" id="GO:0004619">
    <property type="term" value="F:phosphoglycerate mutase activity"/>
    <property type="evidence" value="ECO:0007669"/>
    <property type="project" value="UniProtKB-EC"/>
</dbReference>
<dbReference type="GO" id="GO:0006094">
    <property type="term" value="P:gluconeogenesis"/>
    <property type="evidence" value="ECO:0007669"/>
    <property type="project" value="UniProtKB-UniRule"/>
</dbReference>
<dbReference type="GO" id="GO:0006096">
    <property type="term" value="P:glycolytic process"/>
    <property type="evidence" value="ECO:0007669"/>
    <property type="project" value="UniProtKB-UniRule"/>
</dbReference>
<dbReference type="CDD" id="cd07067">
    <property type="entry name" value="HP_PGM_like"/>
    <property type="match status" value="1"/>
</dbReference>
<dbReference type="FunFam" id="3.40.50.1240:FF:000003">
    <property type="entry name" value="2,3-bisphosphoglycerate-dependent phosphoglycerate mutase"/>
    <property type="match status" value="1"/>
</dbReference>
<dbReference type="Gene3D" id="3.40.50.1240">
    <property type="entry name" value="Phosphoglycerate mutase-like"/>
    <property type="match status" value="1"/>
</dbReference>
<dbReference type="HAMAP" id="MF_01039">
    <property type="entry name" value="PGAM_GpmA"/>
    <property type="match status" value="1"/>
</dbReference>
<dbReference type="InterPro" id="IPR013078">
    <property type="entry name" value="His_Pase_superF_clade-1"/>
</dbReference>
<dbReference type="InterPro" id="IPR029033">
    <property type="entry name" value="His_PPase_superfam"/>
</dbReference>
<dbReference type="InterPro" id="IPR001345">
    <property type="entry name" value="PG/BPGM_mutase_AS"/>
</dbReference>
<dbReference type="InterPro" id="IPR005952">
    <property type="entry name" value="Phosphogly_mut1"/>
</dbReference>
<dbReference type="NCBIfam" id="TIGR01258">
    <property type="entry name" value="pgm_1"/>
    <property type="match status" value="1"/>
</dbReference>
<dbReference type="NCBIfam" id="NF010713">
    <property type="entry name" value="PRK14115.1"/>
    <property type="match status" value="1"/>
</dbReference>
<dbReference type="PANTHER" id="PTHR11931">
    <property type="entry name" value="PHOSPHOGLYCERATE MUTASE"/>
    <property type="match status" value="1"/>
</dbReference>
<dbReference type="Pfam" id="PF00300">
    <property type="entry name" value="His_Phos_1"/>
    <property type="match status" value="1"/>
</dbReference>
<dbReference type="PIRSF" id="PIRSF000709">
    <property type="entry name" value="6PFK_2-Ptase"/>
    <property type="match status" value="1"/>
</dbReference>
<dbReference type="SMART" id="SM00855">
    <property type="entry name" value="PGAM"/>
    <property type="match status" value="1"/>
</dbReference>
<dbReference type="SUPFAM" id="SSF53254">
    <property type="entry name" value="Phosphoglycerate mutase-like"/>
    <property type="match status" value="1"/>
</dbReference>
<dbReference type="PROSITE" id="PS00175">
    <property type="entry name" value="PG_MUTASE"/>
    <property type="match status" value="1"/>
</dbReference>